<feature type="chain" id="PRO_0000293437" description="Small ribosomal subunit protein uS4c">
    <location>
        <begin position="1"/>
        <end position="2922"/>
    </location>
</feature>
<feature type="domain" description="S4 RNA-binding">
    <location>
        <begin position="111"/>
        <end position="174"/>
    </location>
</feature>
<proteinExistence type="inferred from homology"/>
<dbReference type="EMBL" id="DQ630521">
    <property type="protein sequence ID" value="ABF60198.1"/>
    <property type="molecule type" value="Genomic_DNA"/>
</dbReference>
<dbReference type="RefSeq" id="YP_764373.1">
    <property type="nucleotide sequence ID" value="NC_008372.1"/>
</dbReference>
<dbReference type="GeneID" id="4308429"/>
<dbReference type="GO" id="GO:0009507">
    <property type="term" value="C:chloroplast"/>
    <property type="evidence" value="ECO:0007669"/>
    <property type="project" value="UniProtKB-SubCell"/>
</dbReference>
<dbReference type="GO" id="GO:0015935">
    <property type="term" value="C:small ribosomal subunit"/>
    <property type="evidence" value="ECO:0007669"/>
    <property type="project" value="InterPro"/>
</dbReference>
<dbReference type="GO" id="GO:0019843">
    <property type="term" value="F:rRNA binding"/>
    <property type="evidence" value="ECO:0007669"/>
    <property type="project" value="UniProtKB-UniRule"/>
</dbReference>
<dbReference type="GO" id="GO:0003735">
    <property type="term" value="F:structural constituent of ribosome"/>
    <property type="evidence" value="ECO:0007669"/>
    <property type="project" value="InterPro"/>
</dbReference>
<dbReference type="GO" id="GO:0042274">
    <property type="term" value="P:ribosomal small subunit biogenesis"/>
    <property type="evidence" value="ECO:0007669"/>
    <property type="project" value="TreeGrafter"/>
</dbReference>
<dbReference type="GO" id="GO:0006412">
    <property type="term" value="P:translation"/>
    <property type="evidence" value="ECO:0007669"/>
    <property type="project" value="UniProtKB-UniRule"/>
</dbReference>
<dbReference type="CDD" id="cd00165">
    <property type="entry name" value="S4"/>
    <property type="match status" value="1"/>
</dbReference>
<dbReference type="FunFam" id="3.10.290.10:FF:000001">
    <property type="entry name" value="30S ribosomal protein S4"/>
    <property type="match status" value="1"/>
</dbReference>
<dbReference type="Gene3D" id="1.10.1050.10">
    <property type="entry name" value="Ribosomal Protein S4 Delta 41, Chain A, domain 1"/>
    <property type="match status" value="1"/>
</dbReference>
<dbReference type="Gene3D" id="3.10.290.10">
    <property type="entry name" value="RNA-binding S4 domain"/>
    <property type="match status" value="1"/>
</dbReference>
<dbReference type="HAMAP" id="MF_01306_B">
    <property type="entry name" value="Ribosomal_uS4_B"/>
    <property type="match status" value="1"/>
</dbReference>
<dbReference type="InterPro" id="IPR022801">
    <property type="entry name" value="Ribosomal_uS4"/>
</dbReference>
<dbReference type="InterPro" id="IPR005709">
    <property type="entry name" value="Ribosomal_uS4_bac-type"/>
</dbReference>
<dbReference type="InterPro" id="IPR018079">
    <property type="entry name" value="Ribosomal_uS4_CS"/>
</dbReference>
<dbReference type="InterPro" id="IPR001912">
    <property type="entry name" value="Ribosomal_uS4_N"/>
</dbReference>
<dbReference type="InterPro" id="IPR002942">
    <property type="entry name" value="S4_RNA-bd"/>
</dbReference>
<dbReference type="InterPro" id="IPR036986">
    <property type="entry name" value="S4_RNA-bd_sf"/>
</dbReference>
<dbReference type="NCBIfam" id="NF003717">
    <property type="entry name" value="PRK05327.1"/>
    <property type="match status" value="1"/>
</dbReference>
<dbReference type="PANTHER" id="PTHR11831">
    <property type="entry name" value="30S 40S RIBOSOMAL PROTEIN"/>
    <property type="match status" value="1"/>
</dbReference>
<dbReference type="PANTHER" id="PTHR11831:SF4">
    <property type="entry name" value="SMALL RIBOSOMAL SUBUNIT PROTEIN US4M"/>
    <property type="match status" value="1"/>
</dbReference>
<dbReference type="Pfam" id="PF00163">
    <property type="entry name" value="Ribosomal_S4"/>
    <property type="match status" value="1"/>
</dbReference>
<dbReference type="Pfam" id="PF01479">
    <property type="entry name" value="S4"/>
    <property type="match status" value="1"/>
</dbReference>
<dbReference type="SMART" id="SM01390">
    <property type="entry name" value="Ribosomal_S4"/>
    <property type="match status" value="1"/>
</dbReference>
<dbReference type="SMART" id="SM00363">
    <property type="entry name" value="S4"/>
    <property type="match status" value="1"/>
</dbReference>
<dbReference type="SUPFAM" id="SSF55174">
    <property type="entry name" value="Alpha-L RNA-binding motif"/>
    <property type="match status" value="1"/>
</dbReference>
<dbReference type="PROSITE" id="PS00632">
    <property type="entry name" value="RIBOSOMAL_S4"/>
    <property type="match status" value="1"/>
</dbReference>
<dbReference type="PROSITE" id="PS50889">
    <property type="entry name" value="S4"/>
    <property type="match status" value="1"/>
</dbReference>
<organism>
    <name type="scientific">Stigeoclonium helveticum</name>
    <name type="common">Green alga</name>
    <dbReference type="NCBI Taxonomy" id="55999"/>
    <lineage>
        <taxon>Eukaryota</taxon>
        <taxon>Viridiplantae</taxon>
        <taxon>Chlorophyta</taxon>
        <taxon>core chlorophytes</taxon>
        <taxon>Chlorophyceae</taxon>
        <taxon>OCC clade</taxon>
        <taxon>Chaetophorales</taxon>
        <taxon>Chaetophoraceae</taxon>
        <taxon>Stigeoclonium</taxon>
    </lineage>
</organism>
<reference key="1">
    <citation type="journal article" date="2006" name="Mol. Genet. Genomics">
        <title>Distinctive architecture of the chloroplast genome in the chlorophycean green alga Stigeoclonium helveticum.</title>
        <authorList>
            <person name="Belanger A.-S."/>
            <person name="Brouard J.-S."/>
            <person name="Charlebois P."/>
            <person name="Otis C."/>
            <person name="Lemieux C."/>
            <person name="Turmel M."/>
        </authorList>
    </citation>
    <scope>NUCLEOTIDE SEQUENCE [LARGE SCALE GENOMIC DNA]</scope>
    <source>
        <strain>UTEX 441</strain>
    </source>
</reference>
<accession>Q06SJ3</accession>
<sequence length="2922" mass="340276">MSRYLGPRLRITRRLGHLSGLTRKKPAFKPLNPVNPFGPRKIIPPGEHGRNKSFKKKPYESCEYDYLIRLKLKQRLRFHYGLTERQLVRYVQQAKKIKGSTGRVLLRLLEMRLDNIVFRLHMAPTIKAARQLISHGHILINKKKVTIPSYQCEPKDIITVAPKIISMELVSRFLSEFDREKSRYDRILQILEFGRKGVTMPTKNLKTSSKTLSKNSQSRKYVKNEKRAKIQSLKIGAVLNVTINHRGRKEADAISYGFGKMIVIHPFFVGKQSINKNVRVIIYKKSKNNKILYTYPANPFYLHLENLRKLNSLDVAKLFSHSNNQISSKFNKKPLKKSITRKSKRSISALILMNGAKMLPKTNLERRKRVNKDSATNLTENKQIKKEFSPSVFVRIVAAKCLNSKSKQKLLNVSSFQSSLKKFNPSFSKDPVAYREKYVYTKTSRALRLFGTRFYATILKNTRDVKNSSFIERKKFDSRIIGKTPKVNLTKTTRKAEAKAPDFYSSIFKKSSDNQSQNFLNAELLKRESQNSSFSSTFNNSNKVEFSNGASLPVTFKSGKVNNTLIPKLNSNKLADQSVNAQLMNVPALFKQYKNIFSKLSSLKNQKNFKKPKYTNLRSKILTNFLFESKNLSLNLNHFHNFIFVVFSKFCKVLVSKTNLNFKIDNILSISQNFKEFFKHRNFEAKSIDSKKFSMDILLFSLKLKHFTKLNNKNVGTEIGKTREFELSSSILDKKIQNDISLLLLLDKMKTHLQTSLNFVNQFFSSEILMNGIRPYFSSIFSFVLKSEELVKTILTNVINSIKTVLTCSKLTTLKISQQSFLGSAASEKLEKTESFFLENNLIEKLVNLNSNQSNTLYKKIINFAMVSIPKAVFLVDYSENQISLLNKYSLYSAKKQKIQMVKTLNFLKRYNLINYSNFENFKQMIQLNIKNHQTILVHFKDSILNKSKLNLRRNKLSPDSELVLNLEQKLLINQTKCKISLLESLKSNSKLSLFSQFNQNCNQILCRTKIFLNILNKKNSLFQKLNLLKDFHLIKGKDYESLKNLLNNQFQLLQKLKSLVSIVDFPQSVSQSSLLNRVLNKNLEKITETFGSISTLWKVLILQKQNKLNVTESVKQNILQNISVAKAEFTQTVLITILNKTDLSAFIKHYQSSKINNFTFISKLHKINLLDKLNKLNLLDDTVFVQMFSDIREKLAVKKLKQTNVVLTKFLEFGTMSKLSQTELLSLDSFIQTAFLNSNSLTNNIQHLGHKERDNFVRSSSFWKKFSFLLTPSLIKKGLENLKTLNSISSSQYSYLILKLQNLYDQNKTLNLGLNKQYVHEKLRIIKTLLVLIAKNVNITTLTSLNLFKNTTWGSKTLLNLGLNRQKELKLMSGLLISQKIKYSSSFQKWEKDEFSFLMTNYIENQYNYLISKILMRGILTKEEAYFYSRENCQDYLTEKLSFLHSETKQILTSIKLYLLRYQFMVQNNKNSSFSPWNLRFQEENFSLKSSISERTLNSSRIFSLKKQKSVLLDKTMYQKLKNFLQKEILSKNMKSLLENKHFILAYLNKELKAKLFYKVSRLQRKNTLLTETEIYEFSNTFKKLTASNLSVKLATNLSTLIAPTNLSTNFTKKIFKIYKSTNIPVYYNLLSNDTTFLDNKIDNVYLSKVLNKLKLQLNNNKLDLLMVNYTNDKLLRLRAKSSMYQTFAKLAFIENGMILNKHLFPVRSAKSVYLKQFNKNLKFVIYLYNLNMLRSRDILSVQQYEQFKDNYENIFKLIKRKTFVISILNKRKKWKFINYGTYQTLFKNISKNLTTKILSLFQQSTEKNFFQKEKVNKQVQYSLEVEALVQQTLEQLVNSSESPNHSLTSLIYRFIEKSIVFTHPSSNSLKQLTIENKTVIKPVIKKALQRLISLQKKLKSLGPWSSKEKIMLQNKQKTLILQSLVSYLQKQETPFNSNFKTVSNKFKQISMFQTLSFAQRKTVLNKLCLNTYFTPNLQTISNAKDLSNEKKSRALALSGQLTNLQFKLQKEYLTKLNVSLLKAEKNESDLISFNESILLMLQKTTGVDLTNYKQFSRIVTNNSNIDKGSLAKEIYTTKLLFEFIRQNLMDNYRKDKFNFELKQVSKFQKSQFLTNILFKGGSFSSRLSLKKCQNNLIKLKISKLLNHIFSVMPFVNNQTTTTGFISYDHIDTLVSFGIISSTMANVLNKKINVQIQKQKLRKTLLSLQNLQKMTFTSSNKFNRLIYSSILMDVFSRLYELKKAKTITERKYVLIKQKLKIFSLFSALNYKLLDLKEKGSISSSKALELKNQIIQKISQKMKKVKTFAKFKQSLKALKGENFSSRLSYLPKDLDSQKTLEKAKAFEFNPSLLKILKSRGRWARVTVKQLVKQKLLTTKQQEKLQTIVDKQNLMKMKKLRRLVSVFVYCRQIVETQRNTVANNSNYEPLMQNVISSVLKSFNGPWKRVLLNLLYKQNFISENLFLSYLTNNTQKTKSSKTKVISLNNNVDTTYTKTKLKRLLTMYYKQICKLRQFQTNREILKGEFEQKLSAILSSVILVLEKGGLDAFKVIYNTKWVNELCQSNLKINNQKNKNSQISSAIREFVSKYNFLKDQYLNTYKKLQLNDKMKLFKMYKTNLLQELVNLEKTIKSPNAQSFEKSEILSISRLEQLKMQGLISTKICNKLTVMLNNSLQRLIKLDRLFALQNLYLVTSEAKAISENASYMNTGAVLEANSSKVQIQTESNIIQNNEQYIKLKQKIFQSYFRYEYKHIEKSVIKQKLLLQRLDSYNLKQKTTKQYKTNLRRKKSKLLSSEQFNSFFQQLLNFLDSRYKSAGRNRRNPRINSIIRRLNQKLSFDKTLTKKFGDHLQTFIDKRFGPALPIPPHLELKRWKIKTSKLQSKQKLNLKYFILPVGIVRDLAPRRSVGLPILERLIVEYYSRN</sequence>
<keyword id="KW-0150">Chloroplast</keyword>
<keyword id="KW-0934">Plastid</keyword>
<keyword id="KW-0687">Ribonucleoprotein</keyword>
<keyword id="KW-0689">Ribosomal protein</keyword>
<keyword id="KW-0694">RNA-binding</keyword>
<keyword id="KW-0699">rRNA-binding</keyword>
<evidence type="ECO:0000250" key="1"/>
<evidence type="ECO:0000305" key="2"/>
<name>RR4_STIHE</name>
<protein>
    <recommendedName>
        <fullName evidence="2">Small ribosomal subunit protein uS4c</fullName>
    </recommendedName>
    <alternativeName>
        <fullName>30S ribosomal protein S4, chloroplastic</fullName>
    </alternativeName>
</protein>
<geneLocation type="chloroplast"/>
<gene>
    <name type="primary">rps4</name>
</gene>
<comment type="function">
    <text evidence="1">One of the primary rRNA binding proteins, it binds directly to 16S rRNA where it nucleates assembly of the body of the 30S subunit.</text>
</comment>
<comment type="function">
    <text evidence="1">With S5 and S12 plays an important role in translational accuracy.</text>
</comment>
<comment type="subunit">
    <text evidence="1">Part of the 30S ribosomal subunit. Contacts protein S5. The interaction surface between S4 and S5 is involved in control of translational fidelity (By similarity).</text>
</comment>
<comment type="subcellular location">
    <subcellularLocation>
        <location>Plastid</location>
        <location>Chloroplast</location>
    </subcellularLocation>
</comment>
<comment type="similarity">
    <text evidence="2">Belongs to the universal ribosomal protein uS4 family.</text>
</comment>
<comment type="caution">
    <text evidence="2">Despite its length this is not thought to be a pseudogene; it may undergo RNA or protein splicing.</text>
</comment>